<gene>
    <name evidence="1" type="primary">hemH</name>
    <name type="ordered locus">Sden_2678</name>
</gene>
<dbReference type="EC" id="4.98.1.1" evidence="1"/>
<dbReference type="EMBL" id="CP000302">
    <property type="protein sequence ID" value="ABE55957.1"/>
    <property type="molecule type" value="Genomic_DNA"/>
</dbReference>
<dbReference type="RefSeq" id="WP_011497108.1">
    <property type="nucleotide sequence ID" value="NC_007954.1"/>
</dbReference>
<dbReference type="SMR" id="Q12KR9"/>
<dbReference type="STRING" id="318161.Sden_2678"/>
<dbReference type="KEGG" id="sdn:Sden_2678"/>
<dbReference type="eggNOG" id="COG0276">
    <property type="taxonomic scope" value="Bacteria"/>
</dbReference>
<dbReference type="HOGENOM" id="CLU_018884_0_0_6"/>
<dbReference type="OrthoDB" id="9809741at2"/>
<dbReference type="UniPathway" id="UPA00252">
    <property type="reaction ID" value="UER00325"/>
</dbReference>
<dbReference type="Proteomes" id="UP000001982">
    <property type="component" value="Chromosome"/>
</dbReference>
<dbReference type="GO" id="GO:0005737">
    <property type="term" value="C:cytoplasm"/>
    <property type="evidence" value="ECO:0007669"/>
    <property type="project" value="UniProtKB-SubCell"/>
</dbReference>
<dbReference type="GO" id="GO:0004325">
    <property type="term" value="F:ferrochelatase activity"/>
    <property type="evidence" value="ECO:0007669"/>
    <property type="project" value="UniProtKB-UniRule"/>
</dbReference>
<dbReference type="GO" id="GO:0046872">
    <property type="term" value="F:metal ion binding"/>
    <property type="evidence" value="ECO:0007669"/>
    <property type="project" value="UniProtKB-KW"/>
</dbReference>
<dbReference type="GO" id="GO:0006783">
    <property type="term" value="P:heme biosynthetic process"/>
    <property type="evidence" value="ECO:0007669"/>
    <property type="project" value="UniProtKB-UniRule"/>
</dbReference>
<dbReference type="CDD" id="cd00419">
    <property type="entry name" value="Ferrochelatase_C"/>
    <property type="match status" value="1"/>
</dbReference>
<dbReference type="CDD" id="cd03411">
    <property type="entry name" value="Ferrochelatase_N"/>
    <property type="match status" value="1"/>
</dbReference>
<dbReference type="FunFam" id="3.40.50.1400:FF:000002">
    <property type="entry name" value="Ferrochelatase"/>
    <property type="match status" value="1"/>
</dbReference>
<dbReference type="Gene3D" id="3.40.50.1400">
    <property type="match status" value="2"/>
</dbReference>
<dbReference type="HAMAP" id="MF_00323">
    <property type="entry name" value="Ferrochelatase"/>
    <property type="match status" value="1"/>
</dbReference>
<dbReference type="InterPro" id="IPR001015">
    <property type="entry name" value="Ferrochelatase"/>
</dbReference>
<dbReference type="InterPro" id="IPR019772">
    <property type="entry name" value="Ferrochelatase_AS"/>
</dbReference>
<dbReference type="InterPro" id="IPR033644">
    <property type="entry name" value="Ferrochelatase_C"/>
</dbReference>
<dbReference type="InterPro" id="IPR033659">
    <property type="entry name" value="Ferrochelatase_N"/>
</dbReference>
<dbReference type="NCBIfam" id="TIGR00109">
    <property type="entry name" value="hemH"/>
    <property type="match status" value="1"/>
</dbReference>
<dbReference type="PANTHER" id="PTHR11108">
    <property type="entry name" value="FERROCHELATASE"/>
    <property type="match status" value="1"/>
</dbReference>
<dbReference type="PANTHER" id="PTHR11108:SF1">
    <property type="entry name" value="FERROCHELATASE, MITOCHONDRIAL"/>
    <property type="match status" value="1"/>
</dbReference>
<dbReference type="Pfam" id="PF00762">
    <property type="entry name" value="Ferrochelatase"/>
    <property type="match status" value="1"/>
</dbReference>
<dbReference type="SUPFAM" id="SSF53800">
    <property type="entry name" value="Chelatase"/>
    <property type="match status" value="1"/>
</dbReference>
<dbReference type="PROSITE" id="PS00534">
    <property type="entry name" value="FERROCHELATASE"/>
    <property type="match status" value="1"/>
</dbReference>
<feature type="chain" id="PRO_1000019367" description="Ferrochelatase">
    <location>
        <begin position="1"/>
        <end position="338"/>
    </location>
</feature>
<feature type="binding site" evidence="1">
    <location>
        <position position="207"/>
    </location>
    <ligand>
        <name>Fe cation</name>
        <dbReference type="ChEBI" id="CHEBI:24875"/>
    </ligand>
</feature>
<feature type="binding site" evidence="1">
    <location>
        <position position="293"/>
    </location>
    <ligand>
        <name>Fe cation</name>
        <dbReference type="ChEBI" id="CHEBI:24875"/>
    </ligand>
</feature>
<comment type="function">
    <text evidence="1">Catalyzes the ferrous insertion into protoporphyrin IX.</text>
</comment>
<comment type="catalytic activity">
    <reaction evidence="1">
        <text>heme b + 2 H(+) = protoporphyrin IX + Fe(2+)</text>
        <dbReference type="Rhea" id="RHEA:22584"/>
        <dbReference type="ChEBI" id="CHEBI:15378"/>
        <dbReference type="ChEBI" id="CHEBI:29033"/>
        <dbReference type="ChEBI" id="CHEBI:57306"/>
        <dbReference type="ChEBI" id="CHEBI:60344"/>
        <dbReference type="EC" id="4.98.1.1"/>
    </reaction>
</comment>
<comment type="pathway">
    <text evidence="1">Porphyrin-containing compound metabolism; protoheme biosynthesis; protoheme from protoporphyrin-IX: step 1/1.</text>
</comment>
<comment type="subcellular location">
    <subcellularLocation>
        <location evidence="1">Cytoplasm</location>
    </subcellularLocation>
</comment>
<comment type="similarity">
    <text evidence="1">Belongs to the ferrochelatase family.</text>
</comment>
<name>HEMH_SHEDO</name>
<proteinExistence type="inferred from homology"/>
<accession>Q12KR9</accession>
<evidence type="ECO:0000255" key="1">
    <source>
        <dbReference type="HAMAP-Rule" id="MF_00323"/>
    </source>
</evidence>
<sequence>MGHTKRNKTGVLLMNLGTPDAPTTSAVRRYLAEFLSDPRVVEIPRLLWLLILHGIILRIRPAKSAALYKGIWTEAGSPLLAISERQQAKLQGYLDEQQLTDKNGQAVSVHLAMRYGSPSVQQTMLQMHQAGIDNLVVLPLYPQYAAPTTASAFDAIAKTLSQWRYLPSLHFIHTYHDNDDYISALFASIKADFDTNGMPERLLLSYHGMPERNLHLGDPYYCFCMKTTRLVIEKMQQQGLVFDSDFVVTSFQSRFGKAKWLQPYTDVTLEALASEGVRKIAVACPAFSADCLETLEEIEQENREVFIHAGGESFRYISALNDNDDHIVMMANLVKPYL</sequence>
<reference key="1">
    <citation type="submission" date="2006-03" db="EMBL/GenBank/DDBJ databases">
        <title>Complete sequence of Shewanella denitrificans OS217.</title>
        <authorList>
            <consortium name="US DOE Joint Genome Institute"/>
            <person name="Copeland A."/>
            <person name="Lucas S."/>
            <person name="Lapidus A."/>
            <person name="Barry K."/>
            <person name="Detter J.C."/>
            <person name="Glavina del Rio T."/>
            <person name="Hammon N."/>
            <person name="Israni S."/>
            <person name="Dalin E."/>
            <person name="Tice H."/>
            <person name="Pitluck S."/>
            <person name="Brettin T."/>
            <person name="Bruce D."/>
            <person name="Han C."/>
            <person name="Tapia R."/>
            <person name="Gilna P."/>
            <person name="Kiss H."/>
            <person name="Schmutz J."/>
            <person name="Larimer F."/>
            <person name="Land M."/>
            <person name="Hauser L."/>
            <person name="Kyrpides N."/>
            <person name="Lykidis A."/>
            <person name="Richardson P."/>
        </authorList>
    </citation>
    <scope>NUCLEOTIDE SEQUENCE [LARGE SCALE GENOMIC DNA]</scope>
    <source>
        <strain>OS217 / ATCC BAA-1090 / DSM 15013</strain>
    </source>
</reference>
<organism>
    <name type="scientific">Shewanella denitrificans (strain OS217 / ATCC BAA-1090 / DSM 15013)</name>
    <dbReference type="NCBI Taxonomy" id="318161"/>
    <lineage>
        <taxon>Bacteria</taxon>
        <taxon>Pseudomonadati</taxon>
        <taxon>Pseudomonadota</taxon>
        <taxon>Gammaproteobacteria</taxon>
        <taxon>Alteromonadales</taxon>
        <taxon>Shewanellaceae</taxon>
        <taxon>Shewanella</taxon>
    </lineage>
</organism>
<keyword id="KW-0963">Cytoplasm</keyword>
<keyword id="KW-0350">Heme biosynthesis</keyword>
<keyword id="KW-0408">Iron</keyword>
<keyword id="KW-0456">Lyase</keyword>
<keyword id="KW-0479">Metal-binding</keyword>
<keyword id="KW-0627">Porphyrin biosynthesis</keyword>
<keyword id="KW-1185">Reference proteome</keyword>
<protein>
    <recommendedName>
        <fullName evidence="1">Ferrochelatase</fullName>
        <ecNumber evidence="1">4.98.1.1</ecNumber>
    </recommendedName>
    <alternativeName>
        <fullName evidence="1">Heme synthase</fullName>
    </alternativeName>
    <alternativeName>
        <fullName evidence="1">Protoheme ferro-lyase</fullName>
    </alternativeName>
</protein>